<name>HSLV_STAA8</name>
<accession>Q2FZ29</accession>
<keyword id="KW-0021">Allosteric enzyme</keyword>
<keyword id="KW-0963">Cytoplasm</keyword>
<keyword id="KW-0378">Hydrolase</keyword>
<keyword id="KW-0479">Metal-binding</keyword>
<keyword id="KW-0645">Protease</keyword>
<keyword id="KW-1185">Reference proteome</keyword>
<keyword id="KW-0915">Sodium</keyword>
<keyword id="KW-0346">Stress response</keyword>
<keyword id="KW-0888">Threonine protease</keyword>
<feature type="chain" id="PRO_1000012681" description="ATP-dependent protease subunit HslV">
    <location>
        <begin position="1"/>
        <end position="181"/>
    </location>
</feature>
<feature type="active site" evidence="1">
    <location>
        <position position="9"/>
    </location>
</feature>
<feature type="binding site" evidence="1">
    <location>
        <position position="166"/>
    </location>
    <ligand>
        <name>Na(+)</name>
        <dbReference type="ChEBI" id="CHEBI:29101"/>
    </ligand>
</feature>
<feature type="binding site" evidence="1">
    <location>
        <position position="169"/>
    </location>
    <ligand>
        <name>Na(+)</name>
        <dbReference type="ChEBI" id="CHEBI:29101"/>
    </ligand>
</feature>
<feature type="binding site" evidence="1">
    <location>
        <position position="172"/>
    </location>
    <ligand>
        <name>Na(+)</name>
        <dbReference type="ChEBI" id="CHEBI:29101"/>
    </ligand>
</feature>
<gene>
    <name evidence="1" type="primary">hslV</name>
    <name type="ordered locus">SAOUHSC_01225</name>
</gene>
<protein>
    <recommendedName>
        <fullName evidence="1">ATP-dependent protease subunit HslV</fullName>
        <ecNumber evidence="1">3.4.25.2</ecNumber>
    </recommendedName>
</protein>
<dbReference type="EC" id="3.4.25.2" evidence="1"/>
<dbReference type="EMBL" id="CP000253">
    <property type="protein sequence ID" value="ABD30329.1"/>
    <property type="molecule type" value="Genomic_DNA"/>
</dbReference>
<dbReference type="RefSeq" id="WP_000072681.1">
    <property type="nucleotide sequence ID" value="NZ_LS483365.1"/>
</dbReference>
<dbReference type="RefSeq" id="YP_499761.1">
    <property type="nucleotide sequence ID" value="NC_007795.1"/>
</dbReference>
<dbReference type="SMR" id="Q2FZ29"/>
<dbReference type="STRING" id="93061.SAOUHSC_01225"/>
<dbReference type="MEROPS" id="T01.007"/>
<dbReference type="PaxDb" id="1280-SAXN108_1255"/>
<dbReference type="GeneID" id="3920253"/>
<dbReference type="KEGG" id="sao:SAOUHSC_01225"/>
<dbReference type="PATRIC" id="fig|93061.5.peg.1123"/>
<dbReference type="eggNOG" id="COG5405">
    <property type="taxonomic scope" value="Bacteria"/>
</dbReference>
<dbReference type="HOGENOM" id="CLU_093872_1_1_9"/>
<dbReference type="OrthoDB" id="9804884at2"/>
<dbReference type="PRO" id="PR:Q2FZ29"/>
<dbReference type="Proteomes" id="UP000008816">
    <property type="component" value="Chromosome"/>
</dbReference>
<dbReference type="GO" id="GO:0005737">
    <property type="term" value="C:cytoplasm"/>
    <property type="evidence" value="ECO:0000318"/>
    <property type="project" value="GO_Central"/>
</dbReference>
<dbReference type="GO" id="GO:0009376">
    <property type="term" value="C:HslUV protease complex"/>
    <property type="evidence" value="ECO:0007669"/>
    <property type="project" value="UniProtKB-UniRule"/>
</dbReference>
<dbReference type="GO" id="GO:0005839">
    <property type="term" value="C:proteasome core complex"/>
    <property type="evidence" value="ECO:0007669"/>
    <property type="project" value="InterPro"/>
</dbReference>
<dbReference type="GO" id="GO:0046872">
    <property type="term" value="F:metal ion binding"/>
    <property type="evidence" value="ECO:0007669"/>
    <property type="project" value="UniProtKB-KW"/>
</dbReference>
<dbReference type="GO" id="GO:0004298">
    <property type="term" value="F:threonine-type endopeptidase activity"/>
    <property type="evidence" value="ECO:0007669"/>
    <property type="project" value="UniProtKB-KW"/>
</dbReference>
<dbReference type="GO" id="GO:0051603">
    <property type="term" value="P:proteolysis involved in protein catabolic process"/>
    <property type="evidence" value="ECO:0000318"/>
    <property type="project" value="GO_Central"/>
</dbReference>
<dbReference type="CDD" id="cd01913">
    <property type="entry name" value="protease_HslV"/>
    <property type="match status" value="1"/>
</dbReference>
<dbReference type="Gene3D" id="3.60.20.10">
    <property type="entry name" value="Glutamine Phosphoribosylpyrophosphate, subunit 1, domain 1"/>
    <property type="match status" value="1"/>
</dbReference>
<dbReference type="HAMAP" id="MF_00248">
    <property type="entry name" value="HslV"/>
    <property type="match status" value="1"/>
</dbReference>
<dbReference type="InterPro" id="IPR022281">
    <property type="entry name" value="ATP-dep_Prtase_HsIV_su"/>
</dbReference>
<dbReference type="InterPro" id="IPR029055">
    <property type="entry name" value="Ntn_hydrolases_N"/>
</dbReference>
<dbReference type="InterPro" id="IPR001353">
    <property type="entry name" value="Proteasome_sua/b"/>
</dbReference>
<dbReference type="InterPro" id="IPR023333">
    <property type="entry name" value="Proteasome_suB-type"/>
</dbReference>
<dbReference type="NCBIfam" id="TIGR03692">
    <property type="entry name" value="ATP_dep_HslV"/>
    <property type="match status" value="1"/>
</dbReference>
<dbReference type="NCBIfam" id="NF003964">
    <property type="entry name" value="PRK05456.1"/>
    <property type="match status" value="1"/>
</dbReference>
<dbReference type="PANTHER" id="PTHR32194:SF0">
    <property type="entry name" value="ATP-DEPENDENT PROTEASE SUBUNIT HSLV"/>
    <property type="match status" value="1"/>
</dbReference>
<dbReference type="PANTHER" id="PTHR32194">
    <property type="entry name" value="METALLOPROTEASE TLDD"/>
    <property type="match status" value="1"/>
</dbReference>
<dbReference type="Pfam" id="PF00227">
    <property type="entry name" value="Proteasome"/>
    <property type="match status" value="1"/>
</dbReference>
<dbReference type="PIRSF" id="PIRSF039093">
    <property type="entry name" value="HslV"/>
    <property type="match status" value="1"/>
</dbReference>
<dbReference type="SUPFAM" id="SSF56235">
    <property type="entry name" value="N-terminal nucleophile aminohydrolases (Ntn hydrolases)"/>
    <property type="match status" value="1"/>
</dbReference>
<dbReference type="PROSITE" id="PS51476">
    <property type="entry name" value="PROTEASOME_BETA_2"/>
    <property type="match status" value="1"/>
</dbReference>
<comment type="function">
    <text evidence="1">Protease subunit of a proteasome-like degradation complex believed to be a general protein degrading machinery.</text>
</comment>
<comment type="catalytic activity">
    <reaction evidence="1">
        <text>ATP-dependent cleavage of peptide bonds with broad specificity.</text>
        <dbReference type="EC" id="3.4.25.2"/>
    </reaction>
</comment>
<comment type="activity regulation">
    <text evidence="1">Allosterically activated by HslU binding.</text>
</comment>
<comment type="subunit">
    <text evidence="1">A double ring-shaped homohexamer of HslV is capped on each side by a ring-shaped HslU homohexamer. The assembly of the HslU/HslV complex is dependent on binding of ATP.</text>
</comment>
<comment type="subcellular location">
    <subcellularLocation>
        <location evidence="1">Cytoplasm</location>
    </subcellularLocation>
</comment>
<comment type="similarity">
    <text evidence="1">Belongs to the peptidase T1B family. HslV subfamily.</text>
</comment>
<proteinExistence type="inferred from homology"/>
<sequence>MSNTTLHATTIYAVRHNGKAAMAGDGQVTLGQQVIMKQTARKVRRLYEGKVLAGFAGSVADAFTLFEKFETKLQQFSGNLERAAVELAQEWRGDKQLRQLEAMLIVMDKDAILVVSGTGEVIAPDDDLIAIGSGGNYALSAGRALKRHASHLSAEEMAYESLKVAADICVFTNDNIVVETL</sequence>
<evidence type="ECO:0000255" key="1">
    <source>
        <dbReference type="HAMAP-Rule" id="MF_00248"/>
    </source>
</evidence>
<reference key="1">
    <citation type="book" date="2006" name="Gram positive pathogens, 2nd edition">
        <title>The Staphylococcus aureus NCTC 8325 genome.</title>
        <editorList>
            <person name="Fischetti V."/>
            <person name="Novick R."/>
            <person name="Ferretti J."/>
            <person name="Portnoy D."/>
            <person name="Rood J."/>
        </editorList>
        <authorList>
            <person name="Gillaspy A.F."/>
            <person name="Worrell V."/>
            <person name="Orvis J."/>
            <person name="Roe B.A."/>
            <person name="Dyer D.W."/>
            <person name="Iandolo J.J."/>
        </authorList>
    </citation>
    <scope>NUCLEOTIDE SEQUENCE [LARGE SCALE GENOMIC DNA]</scope>
    <source>
        <strain>NCTC 8325 / PS 47</strain>
    </source>
</reference>
<organism>
    <name type="scientific">Staphylococcus aureus (strain NCTC 8325 / PS 47)</name>
    <dbReference type="NCBI Taxonomy" id="93061"/>
    <lineage>
        <taxon>Bacteria</taxon>
        <taxon>Bacillati</taxon>
        <taxon>Bacillota</taxon>
        <taxon>Bacilli</taxon>
        <taxon>Bacillales</taxon>
        <taxon>Staphylococcaceae</taxon>
        <taxon>Staphylococcus</taxon>
    </lineage>
</organism>